<name>ARGE_VIBCM</name>
<feature type="chain" id="PRO_1000163956" description="Acetylornithine deacetylase">
    <location>
        <begin position="1"/>
        <end position="378"/>
    </location>
</feature>
<feature type="active site" evidence="1">
    <location>
        <position position="78"/>
    </location>
</feature>
<feature type="active site" evidence="1">
    <location>
        <position position="140"/>
    </location>
</feature>
<feature type="binding site" evidence="1">
    <location>
        <position position="76"/>
    </location>
    <ligand>
        <name>Zn(2+)</name>
        <dbReference type="ChEBI" id="CHEBI:29105"/>
        <label>1</label>
    </ligand>
</feature>
<feature type="binding site" evidence="1">
    <location>
        <position position="108"/>
    </location>
    <ligand>
        <name>Zn(2+)</name>
        <dbReference type="ChEBI" id="CHEBI:29105"/>
        <label>1</label>
    </ligand>
</feature>
<feature type="binding site" evidence="1">
    <location>
        <position position="108"/>
    </location>
    <ligand>
        <name>Zn(2+)</name>
        <dbReference type="ChEBI" id="CHEBI:29105"/>
        <label>2</label>
    </ligand>
</feature>
<feature type="binding site" evidence="1">
    <location>
        <position position="141"/>
    </location>
    <ligand>
        <name>Zn(2+)</name>
        <dbReference type="ChEBI" id="CHEBI:29105"/>
        <label>2</label>
    </ligand>
</feature>
<feature type="binding site" evidence="1">
    <location>
        <position position="165"/>
    </location>
    <ligand>
        <name>Zn(2+)</name>
        <dbReference type="ChEBI" id="CHEBI:29105"/>
        <label>1</label>
    </ligand>
</feature>
<feature type="binding site" evidence="1">
    <location>
        <position position="351"/>
    </location>
    <ligand>
        <name>Zn(2+)</name>
        <dbReference type="ChEBI" id="CHEBI:29105"/>
        <label>2</label>
    </ligand>
</feature>
<keyword id="KW-0028">Amino-acid biosynthesis</keyword>
<keyword id="KW-0055">Arginine biosynthesis</keyword>
<keyword id="KW-0170">Cobalt</keyword>
<keyword id="KW-0963">Cytoplasm</keyword>
<keyword id="KW-0378">Hydrolase</keyword>
<keyword id="KW-0479">Metal-binding</keyword>
<keyword id="KW-0862">Zinc</keyword>
<proteinExistence type="inferred from homology"/>
<sequence length="378" mass="41964">MPLPSFLEVYEGLISTSSISSTDARWDEGNEQVIAKLADWLSALGFSIQIEQVAPNKQNLIAKLGSGEGGLLLAGHSDTVPFDEGRWNYNPHALTQVNNRFYGLGTADMKGFFAFIYEAVKNVDWSKQTKPLYVLATCDEETTMLGARHFTENAPFKPDYCIIGEPTSLVPIRAHKGHVANAIRVTGKSGHSSNPALGVNAIEIMHEVLFALMQLRDRLIKEYHHPGFEIPTPTLNLGHIHGGDSPNRICGCCELHYDVRPLPGISLDGLDNLMHDALREVQQKWPGRIELVPLHDPIPGYECAHDHPFIHGISEICEQEAQTVNYCTEAPFLQQVCPTLVLGPGSIDQAHQPDEFLAFEFIDPTVRVLSRAMQKYCF</sequence>
<organism>
    <name type="scientific">Vibrio cholerae serotype O1 (strain M66-2)</name>
    <dbReference type="NCBI Taxonomy" id="579112"/>
    <lineage>
        <taxon>Bacteria</taxon>
        <taxon>Pseudomonadati</taxon>
        <taxon>Pseudomonadota</taxon>
        <taxon>Gammaproteobacteria</taxon>
        <taxon>Vibrionales</taxon>
        <taxon>Vibrionaceae</taxon>
        <taxon>Vibrio</taxon>
    </lineage>
</organism>
<accession>C3LRV6</accession>
<protein>
    <recommendedName>
        <fullName evidence="1">Acetylornithine deacetylase</fullName>
        <shortName evidence="1">AO</shortName>
        <shortName evidence="1">Acetylornithinase</shortName>
        <ecNumber evidence="1">3.5.1.16</ecNumber>
    </recommendedName>
    <alternativeName>
        <fullName evidence="1">N-acetylornithinase</fullName>
        <shortName evidence="1">NAO</shortName>
    </alternativeName>
</protein>
<dbReference type="EC" id="3.5.1.16" evidence="1"/>
<dbReference type="EMBL" id="CP001233">
    <property type="protein sequence ID" value="ACP06861.1"/>
    <property type="molecule type" value="Genomic_DNA"/>
</dbReference>
<dbReference type="RefSeq" id="WP_001130865.1">
    <property type="nucleotide sequence ID" value="NC_012578.1"/>
</dbReference>
<dbReference type="SMR" id="C3LRV6"/>
<dbReference type="KEGG" id="vcm:VCM66_2565"/>
<dbReference type="HOGENOM" id="CLU_021802_2_4_6"/>
<dbReference type="UniPathway" id="UPA00068">
    <property type="reaction ID" value="UER00110"/>
</dbReference>
<dbReference type="Proteomes" id="UP000001217">
    <property type="component" value="Chromosome I"/>
</dbReference>
<dbReference type="GO" id="GO:0005737">
    <property type="term" value="C:cytoplasm"/>
    <property type="evidence" value="ECO:0007669"/>
    <property type="project" value="UniProtKB-SubCell"/>
</dbReference>
<dbReference type="GO" id="GO:0008777">
    <property type="term" value="F:acetylornithine deacetylase activity"/>
    <property type="evidence" value="ECO:0007669"/>
    <property type="project" value="UniProtKB-UniRule"/>
</dbReference>
<dbReference type="GO" id="GO:0008270">
    <property type="term" value="F:zinc ion binding"/>
    <property type="evidence" value="ECO:0007669"/>
    <property type="project" value="UniProtKB-UniRule"/>
</dbReference>
<dbReference type="GO" id="GO:0006526">
    <property type="term" value="P:L-arginine biosynthetic process"/>
    <property type="evidence" value="ECO:0007669"/>
    <property type="project" value="UniProtKB-UniRule"/>
</dbReference>
<dbReference type="CDD" id="cd03894">
    <property type="entry name" value="M20_ArgE"/>
    <property type="match status" value="1"/>
</dbReference>
<dbReference type="FunFam" id="3.30.70.360:FF:000003">
    <property type="entry name" value="Acetylornithine deacetylase"/>
    <property type="match status" value="1"/>
</dbReference>
<dbReference type="Gene3D" id="3.30.70.360">
    <property type="match status" value="1"/>
</dbReference>
<dbReference type="Gene3D" id="3.40.630.10">
    <property type="entry name" value="Zn peptidases"/>
    <property type="match status" value="1"/>
</dbReference>
<dbReference type="HAMAP" id="MF_01108">
    <property type="entry name" value="ArgE"/>
    <property type="match status" value="1"/>
</dbReference>
<dbReference type="InterPro" id="IPR010169">
    <property type="entry name" value="AcOrn-deacetyl"/>
</dbReference>
<dbReference type="InterPro" id="IPR001261">
    <property type="entry name" value="ArgE/DapE_CS"/>
</dbReference>
<dbReference type="InterPro" id="IPR036264">
    <property type="entry name" value="Bact_exopeptidase_dim_dom"/>
</dbReference>
<dbReference type="InterPro" id="IPR002933">
    <property type="entry name" value="Peptidase_M20"/>
</dbReference>
<dbReference type="InterPro" id="IPR011650">
    <property type="entry name" value="Peptidase_M20_dimer"/>
</dbReference>
<dbReference type="InterPro" id="IPR050072">
    <property type="entry name" value="Peptidase_M20A"/>
</dbReference>
<dbReference type="NCBIfam" id="TIGR01892">
    <property type="entry name" value="AcOrn-deacetyl"/>
    <property type="match status" value="1"/>
</dbReference>
<dbReference type="NCBIfam" id="NF003474">
    <property type="entry name" value="PRK05111.1"/>
    <property type="match status" value="1"/>
</dbReference>
<dbReference type="PANTHER" id="PTHR43808">
    <property type="entry name" value="ACETYLORNITHINE DEACETYLASE"/>
    <property type="match status" value="1"/>
</dbReference>
<dbReference type="PANTHER" id="PTHR43808:SF1">
    <property type="entry name" value="ACETYLORNITHINE DEACETYLASE"/>
    <property type="match status" value="1"/>
</dbReference>
<dbReference type="Pfam" id="PF07687">
    <property type="entry name" value="M20_dimer"/>
    <property type="match status" value="1"/>
</dbReference>
<dbReference type="Pfam" id="PF01546">
    <property type="entry name" value="Peptidase_M20"/>
    <property type="match status" value="1"/>
</dbReference>
<dbReference type="SUPFAM" id="SSF55031">
    <property type="entry name" value="Bacterial exopeptidase dimerisation domain"/>
    <property type="match status" value="1"/>
</dbReference>
<dbReference type="SUPFAM" id="SSF53187">
    <property type="entry name" value="Zn-dependent exopeptidases"/>
    <property type="match status" value="1"/>
</dbReference>
<dbReference type="PROSITE" id="PS00758">
    <property type="entry name" value="ARGE_DAPE_CPG2_1"/>
    <property type="match status" value="1"/>
</dbReference>
<dbReference type="PROSITE" id="PS00759">
    <property type="entry name" value="ARGE_DAPE_CPG2_2"/>
    <property type="match status" value="1"/>
</dbReference>
<evidence type="ECO:0000255" key="1">
    <source>
        <dbReference type="HAMAP-Rule" id="MF_01108"/>
    </source>
</evidence>
<gene>
    <name evidence="1" type="primary">argE</name>
    <name type="ordered locus">VCM66_2565</name>
</gene>
<comment type="function">
    <text evidence="1">Catalyzes the hydrolysis of the amide bond of N(2)-acetylated L-amino acids. Cleaves the acetyl group from N-acetyl-L-ornithine to form L-ornithine, an intermediate in L-arginine biosynthesis pathway, and a branchpoint in the synthesis of polyamines.</text>
</comment>
<comment type="catalytic activity">
    <reaction evidence="1">
        <text>N(2)-acetyl-L-ornithine + H2O = L-ornithine + acetate</text>
        <dbReference type="Rhea" id="RHEA:15941"/>
        <dbReference type="ChEBI" id="CHEBI:15377"/>
        <dbReference type="ChEBI" id="CHEBI:30089"/>
        <dbReference type="ChEBI" id="CHEBI:46911"/>
        <dbReference type="ChEBI" id="CHEBI:57805"/>
        <dbReference type="EC" id="3.5.1.16"/>
    </reaction>
</comment>
<comment type="cofactor">
    <cofactor evidence="1">
        <name>Zn(2+)</name>
        <dbReference type="ChEBI" id="CHEBI:29105"/>
    </cofactor>
    <cofactor evidence="1">
        <name>Co(2+)</name>
        <dbReference type="ChEBI" id="CHEBI:48828"/>
    </cofactor>
    <text evidence="1">Binds 2 Zn(2+) or Co(2+) ions per subunit.</text>
</comment>
<comment type="cofactor">
    <cofactor evidence="1">
        <name>glutathione</name>
        <dbReference type="ChEBI" id="CHEBI:57925"/>
    </cofactor>
</comment>
<comment type="pathway">
    <text evidence="1">Amino-acid biosynthesis; L-arginine biosynthesis; L-ornithine from N(2)-acetyl-L-ornithine (linear): step 1/1.</text>
</comment>
<comment type="subunit">
    <text evidence="1">Homodimer.</text>
</comment>
<comment type="subcellular location">
    <subcellularLocation>
        <location evidence="1">Cytoplasm</location>
    </subcellularLocation>
</comment>
<comment type="similarity">
    <text evidence="1">Belongs to the peptidase M20A family. ArgE subfamily.</text>
</comment>
<reference key="1">
    <citation type="journal article" date="2008" name="PLoS ONE">
        <title>A recalibrated molecular clock and independent origins for the cholera pandemic clones.</title>
        <authorList>
            <person name="Feng L."/>
            <person name="Reeves P.R."/>
            <person name="Lan R."/>
            <person name="Ren Y."/>
            <person name="Gao C."/>
            <person name="Zhou Z."/>
            <person name="Ren Y."/>
            <person name="Cheng J."/>
            <person name="Wang W."/>
            <person name="Wang J."/>
            <person name="Qian W."/>
            <person name="Li D."/>
            <person name="Wang L."/>
        </authorList>
    </citation>
    <scope>NUCLEOTIDE SEQUENCE [LARGE SCALE GENOMIC DNA]</scope>
    <source>
        <strain>M66-2</strain>
    </source>
</reference>